<feature type="signal peptide" evidence="1">
    <location>
        <begin position="1"/>
        <end position="20"/>
    </location>
</feature>
<feature type="propeptide" id="PRO_5000379122">
    <location>
        <begin position="21"/>
        <end position="69"/>
    </location>
</feature>
<feature type="peptide" id="PRO_5000379123" description="Conopeptide Y-Pl1">
    <location>
        <begin position="40"/>
        <end position="69"/>
    </location>
</feature>
<sequence>MSKLGVVLFVFLLLLPLAAPQPVGDQPADQPADRNAEARARFLHPFQYYTLYRYLTRFLHRYPIYYIRY</sequence>
<proteinExistence type="evidence at protein level"/>
<accession>B3SVF0</accession>
<comment type="function">
    <text evidence="2">Tyrosine-rich conopeptide that targets several channels/receptors that are expressed in Xenopus oocytes. These targets are the voltage-gated potassium channels Kv1.6/KCNA6 (IC(50) is 170 nM) and Kv1.2/KCNA2 (IC(50) is 2.0 uM), Nav1.2/SCN2A (30% of inhibition), and N-methyl-D-aspartate (NMDA) receptor (GRIN1/GRIN2A/GRIN3B and GRIN1/GRIN2B/GRIN3B) (15% of inhibition). In vivo, causes the marine worm N.virens to move very slowly in contrast to control worms, and causes seizures (at 5 nmol) and death (20 nmol) to mice when intracranially injected.</text>
</comment>
<comment type="subcellular location">
    <subcellularLocation>
        <location evidence="2">Secreted</location>
    </subcellularLocation>
</comment>
<comment type="tissue specificity">
    <text evidence="3">Expressed by the venom duct.</text>
</comment>
<comment type="mass spectrometry"/>
<comment type="miscellaneous">
    <text evidence="3">The mature peptide does not contain cysteine residues.</text>
</comment>
<comment type="miscellaneous">
    <text evidence="4">Negative results: does not target Kv1.3/KCNA3 (IC(50) is &gt;50 uM), Kv1.4/KCNA4 (IC(50) is &gt;50 uM), Kv1.5/KCNA5 (IC(50) is &gt;5 uM).</text>
</comment>
<comment type="similarity">
    <text evidence="3">Belongs to the conotoxin M superfamily. Conopeptide Y family.</text>
</comment>
<reference key="1">
    <citation type="journal article" date="2008" name="J. Biol. Chem.">
        <title>Tyrosine-rich conopeptides affect voltage-gated K+ channels.</title>
        <authorList>
            <person name="Imperial J.S."/>
            <person name="Chen P."/>
            <person name="Sporning A."/>
            <person name="Terlau H."/>
            <person name="Daly N.L."/>
            <person name="Craik D.J."/>
            <person name="Alewood P.F."/>
            <person name="Olivera B.M."/>
        </authorList>
    </citation>
    <scope>NUCLEOTIDE SEQUENCE [MRNA]</scope>
    <scope>PROTEIN SEQUENCE OF 40-69</scope>
    <scope>SYNTHESIS OF 40-69</scope>
    <scope>FUNCTION</scope>
    <scope>BIOASSAY</scope>
    <scope>MASS SPECTROMETRY</scope>
    <scope>SUBCELLULAR LOCATION</scope>
    <source>
        <tissue>Venom</tissue>
        <tissue>Venom duct</tissue>
    </source>
</reference>
<organism>
    <name type="scientific">Conus planorbis</name>
    <name type="common">Planorbis cone</name>
    <dbReference type="NCBI Taxonomy" id="97183"/>
    <lineage>
        <taxon>Eukaryota</taxon>
        <taxon>Metazoa</taxon>
        <taxon>Spiralia</taxon>
        <taxon>Lophotrochozoa</taxon>
        <taxon>Mollusca</taxon>
        <taxon>Gastropoda</taxon>
        <taxon>Caenogastropoda</taxon>
        <taxon>Neogastropoda</taxon>
        <taxon>Conoidea</taxon>
        <taxon>Conidae</taxon>
        <taxon>Conus</taxon>
        <taxon>Strategoconus</taxon>
    </lineage>
</organism>
<protein>
    <recommendedName>
        <fullName>Conopeptide Y-Pl1</fullName>
    </recommendedName>
    <alternativeName>
        <fullName>CPY-Pl1</fullName>
    </alternativeName>
</protein>
<keyword id="KW-0903">Direct protein sequencing</keyword>
<keyword id="KW-0872">Ion channel impairing toxin</keyword>
<keyword id="KW-1028">Ionotropic glutamate receptor inhibitor</keyword>
<keyword id="KW-0528">Neurotoxin</keyword>
<keyword id="KW-0629">Postsynaptic neurotoxin</keyword>
<keyword id="KW-0632">Potassium channel impairing toxin</keyword>
<keyword id="KW-0964">Secreted</keyword>
<keyword id="KW-0732">Signal</keyword>
<keyword id="KW-0800">Toxin</keyword>
<keyword id="KW-1220">Voltage-gated potassium channel impairing toxin</keyword>
<keyword id="KW-0738">Voltage-gated sodium channel impairing toxin</keyword>
<evidence type="ECO:0000255" key="1"/>
<evidence type="ECO:0000269" key="2">
    <source>
    </source>
</evidence>
<evidence type="ECO:0000305" key="3"/>
<evidence type="ECO:0000305" key="4">
    <source>
    </source>
</evidence>
<name>CPY1_CONPO</name>
<dbReference type="EMBL" id="EU000528">
    <property type="protein sequence ID" value="ABV74049.1"/>
    <property type="molecule type" value="mRNA"/>
</dbReference>
<dbReference type="GO" id="GO:0005576">
    <property type="term" value="C:extracellular region"/>
    <property type="evidence" value="ECO:0007669"/>
    <property type="project" value="UniProtKB-SubCell"/>
</dbReference>
<dbReference type="GO" id="GO:0035792">
    <property type="term" value="C:host cell postsynaptic membrane"/>
    <property type="evidence" value="ECO:0007669"/>
    <property type="project" value="UniProtKB-KW"/>
</dbReference>
<dbReference type="GO" id="GO:0008200">
    <property type="term" value="F:ion channel inhibitor activity"/>
    <property type="evidence" value="ECO:0007669"/>
    <property type="project" value="InterPro"/>
</dbReference>
<dbReference type="GO" id="GO:0015459">
    <property type="term" value="F:potassium channel regulator activity"/>
    <property type="evidence" value="ECO:0007669"/>
    <property type="project" value="UniProtKB-KW"/>
</dbReference>
<dbReference type="GO" id="GO:0017080">
    <property type="term" value="F:sodium channel regulator activity"/>
    <property type="evidence" value="ECO:0007669"/>
    <property type="project" value="UniProtKB-KW"/>
</dbReference>
<dbReference type="GO" id="GO:0090729">
    <property type="term" value="F:toxin activity"/>
    <property type="evidence" value="ECO:0007669"/>
    <property type="project" value="UniProtKB-KW"/>
</dbReference>
<dbReference type="InterPro" id="IPR004214">
    <property type="entry name" value="Conotoxin"/>
</dbReference>
<dbReference type="Pfam" id="PF02950">
    <property type="entry name" value="Conotoxin"/>
    <property type="match status" value="1"/>
</dbReference>